<sequence>MAAKPGIPKGTRDFSPVEMAKRNYIFNTIRDVYHLYGFQQIETPSMEMLSTLMGKYGEEGDKLLFKIQNSGDYFSGITDEELLSRNAAKLASKFCEKGLRYDLTVPFARYVVMHRDEITFPFKRYQIQPVWRADRPQKGRYREFYQCDADVVGSDSLLNEVELMQIVDTVFTRFGIRVCIKINNRKILTGIAEIIGEADKIVDITVAIDKLDKIGLDNVNKELAEKGISEEAIAKLQPIILLSGTNTEKLATLKTVLSDSETGLKGVEESEFILNTLQTMGLKNEIELDLTLARGLNYYTGAIFEVKALDVQIGSITGGGRYDNLTGVFGMAGVSGVGISFGADRIFDVLNQLELYPKEAVNGTQLLFINFGEKEAAFSMGILSKARAAGIRAEIFPDAAKMKKQMSYANVKNIPFVAIVGENEMNEGKAMLKNMESGEQQLVTAEELIGALTK</sequence>
<accession>Q64QS2</accession>
<comment type="catalytic activity">
    <reaction evidence="1">
        <text>tRNA(His) + L-histidine + ATP = L-histidyl-tRNA(His) + AMP + diphosphate + H(+)</text>
        <dbReference type="Rhea" id="RHEA:17313"/>
        <dbReference type="Rhea" id="RHEA-COMP:9665"/>
        <dbReference type="Rhea" id="RHEA-COMP:9689"/>
        <dbReference type="ChEBI" id="CHEBI:15378"/>
        <dbReference type="ChEBI" id="CHEBI:30616"/>
        <dbReference type="ChEBI" id="CHEBI:33019"/>
        <dbReference type="ChEBI" id="CHEBI:57595"/>
        <dbReference type="ChEBI" id="CHEBI:78442"/>
        <dbReference type="ChEBI" id="CHEBI:78527"/>
        <dbReference type="ChEBI" id="CHEBI:456215"/>
        <dbReference type="EC" id="6.1.1.21"/>
    </reaction>
</comment>
<comment type="subunit">
    <text evidence="1">Homodimer.</text>
</comment>
<comment type="subcellular location">
    <subcellularLocation>
        <location evidence="1">Cytoplasm</location>
    </subcellularLocation>
</comment>
<comment type="similarity">
    <text evidence="1">Belongs to the class-II aminoacyl-tRNA synthetase family.</text>
</comment>
<evidence type="ECO:0000255" key="1">
    <source>
        <dbReference type="HAMAP-Rule" id="MF_00127"/>
    </source>
</evidence>
<proteinExistence type="inferred from homology"/>
<dbReference type="EC" id="6.1.1.21" evidence="1"/>
<dbReference type="EMBL" id="AP006841">
    <property type="protein sequence ID" value="BAD50159.1"/>
    <property type="molecule type" value="Genomic_DNA"/>
</dbReference>
<dbReference type="RefSeq" id="WP_011203280.1">
    <property type="nucleotide sequence ID" value="NC_006347.1"/>
</dbReference>
<dbReference type="RefSeq" id="YP_100693.1">
    <property type="nucleotide sequence ID" value="NC_006347.1"/>
</dbReference>
<dbReference type="SMR" id="Q64QS2"/>
<dbReference type="STRING" id="295405.BF3416"/>
<dbReference type="KEGG" id="bfr:BF3416"/>
<dbReference type="PATRIC" id="fig|295405.11.peg.3283"/>
<dbReference type="HOGENOM" id="CLU_025113_3_0_10"/>
<dbReference type="OrthoDB" id="9800814at2"/>
<dbReference type="Proteomes" id="UP000002197">
    <property type="component" value="Chromosome"/>
</dbReference>
<dbReference type="GO" id="GO:0005737">
    <property type="term" value="C:cytoplasm"/>
    <property type="evidence" value="ECO:0007669"/>
    <property type="project" value="UniProtKB-SubCell"/>
</dbReference>
<dbReference type="GO" id="GO:0005524">
    <property type="term" value="F:ATP binding"/>
    <property type="evidence" value="ECO:0007669"/>
    <property type="project" value="UniProtKB-UniRule"/>
</dbReference>
<dbReference type="GO" id="GO:0004821">
    <property type="term" value="F:histidine-tRNA ligase activity"/>
    <property type="evidence" value="ECO:0007669"/>
    <property type="project" value="UniProtKB-UniRule"/>
</dbReference>
<dbReference type="GO" id="GO:0006427">
    <property type="term" value="P:histidyl-tRNA aminoacylation"/>
    <property type="evidence" value="ECO:0007669"/>
    <property type="project" value="UniProtKB-UniRule"/>
</dbReference>
<dbReference type="CDD" id="cd00773">
    <property type="entry name" value="HisRS-like_core"/>
    <property type="match status" value="1"/>
</dbReference>
<dbReference type="CDD" id="cd00859">
    <property type="entry name" value="HisRS_anticodon"/>
    <property type="match status" value="1"/>
</dbReference>
<dbReference type="FunFam" id="3.30.930.10:FF:000093">
    <property type="entry name" value="Histidine--tRNA ligase"/>
    <property type="match status" value="1"/>
</dbReference>
<dbReference type="Gene3D" id="3.40.50.800">
    <property type="entry name" value="Anticodon-binding domain"/>
    <property type="match status" value="1"/>
</dbReference>
<dbReference type="Gene3D" id="3.30.930.10">
    <property type="entry name" value="Bira Bifunctional Protein, Domain 2"/>
    <property type="match status" value="1"/>
</dbReference>
<dbReference type="HAMAP" id="MF_00127">
    <property type="entry name" value="His_tRNA_synth"/>
    <property type="match status" value="1"/>
</dbReference>
<dbReference type="InterPro" id="IPR006195">
    <property type="entry name" value="aa-tRNA-synth_II"/>
</dbReference>
<dbReference type="InterPro" id="IPR045864">
    <property type="entry name" value="aa-tRNA-synth_II/BPL/LPL"/>
</dbReference>
<dbReference type="InterPro" id="IPR004154">
    <property type="entry name" value="Anticodon-bd"/>
</dbReference>
<dbReference type="InterPro" id="IPR036621">
    <property type="entry name" value="Anticodon-bd_dom_sf"/>
</dbReference>
<dbReference type="InterPro" id="IPR015807">
    <property type="entry name" value="His-tRNA-ligase"/>
</dbReference>
<dbReference type="InterPro" id="IPR041715">
    <property type="entry name" value="HisRS-like_core"/>
</dbReference>
<dbReference type="InterPro" id="IPR004516">
    <property type="entry name" value="HisRS/HisZ"/>
</dbReference>
<dbReference type="InterPro" id="IPR033656">
    <property type="entry name" value="HisRS_anticodon"/>
</dbReference>
<dbReference type="NCBIfam" id="TIGR00442">
    <property type="entry name" value="hisS"/>
    <property type="match status" value="1"/>
</dbReference>
<dbReference type="PANTHER" id="PTHR11476:SF7">
    <property type="entry name" value="HISTIDINE--TRNA LIGASE"/>
    <property type="match status" value="1"/>
</dbReference>
<dbReference type="PANTHER" id="PTHR11476">
    <property type="entry name" value="HISTIDYL-TRNA SYNTHETASE"/>
    <property type="match status" value="1"/>
</dbReference>
<dbReference type="Pfam" id="PF03129">
    <property type="entry name" value="HGTP_anticodon"/>
    <property type="match status" value="1"/>
</dbReference>
<dbReference type="Pfam" id="PF13393">
    <property type="entry name" value="tRNA-synt_His"/>
    <property type="match status" value="2"/>
</dbReference>
<dbReference type="PIRSF" id="PIRSF001549">
    <property type="entry name" value="His-tRNA_synth"/>
    <property type="match status" value="1"/>
</dbReference>
<dbReference type="SUPFAM" id="SSF52954">
    <property type="entry name" value="Class II aaRS ABD-related"/>
    <property type="match status" value="1"/>
</dbReference>
<dbReference type="SUPFAM" id="SSF55681">
    <property type="entry name" value="Class II aaRS and biotin synthetases"/>
    <property type="match status" value="1"/>
</dbReference>
<dbReference type="PROSITE" id="PS50862">
    <property type="entry name" value="AA_TRNA_LIGASE_II"/>
    <property type="match status" value="1"/>
</dbReference>
<gene>
    <name evidence="1" type="primary">hisS</name>
    <name type="ordered locus">BF3416</name>
</gene>
<reference key="1">
    <citation type="journal article" date="2004" name="Proc. Natl. Acad. Sci. U.S.A.">
        <title>Genomic analysis of Bacteroides fragilis reveals extensive DNA inversions regulating cell surface adaptation.</title>
        <authorList>
            <person name="Kuwahara T."/>
            <person name="Yamashita A."/>
            <person name="Hirakawa H."/>
            <person name="Nakayama H."/>
            <person name="Toh H."/>
            <person name="Okada N."/>
            <person name="Kuhara S."/>
            <person name="Hattori M."/>
            <person name="Hayashi T."/>
            <person name="Ohnishi Y."/>
        </authorList>
    </citation>
    <scope>NUCLEOTIDE SEQUENCE [LARGE SCALE GENOMIC DNA]</scope>
    <source>
        <strain>YCH46</strain>
    </source>
</reference>
<protein>
    <recommendedName>
        <fullName evidence="1">Histidine--tRNA ligase</fullName>
        <ecNumber evidence="1">6.1.1.21</ecNumber>
    </recommendedName>
    <alternativeName>
        <fullName evidence="1">Histidyl-tRNA synthetase</fullName>
        <shortName evidence="1">HisRS</shortName>
    </alternativeName>
</protein>
<organism>
    <name type="scientific">Bacteroides fragilis (strain YCH46)</name>
    <dbReference type="NCBI Taxonomy" id="295405"/>
    <lineage>
        <taxon>Bacteria</taxon>
        <taxon>Pseudomonadati</taxon>
        <taxon>Bacteroidota</taxon>
        <taxon>Bacteroidia</taxon>
        <taxon>Bacteroidales</taxon>
        <taxon>Bacteroidaceae</taxon>
        <taxon>Bacteroides</taxon>
    </lineage>
</organism>
<feature type="chain" id="PRO_0000136108" description="Histidine--tRNA ligase">
    <location>
        <begin position="1"/>
        <end position="454"/>
    </location>
</feature>
<keyword id="KW-0030">Aminoacyl-tRNA synthetase</keyword>
<keyword id="KW-0067">ATP-binding</keyword>
<keyword id="KW-0963">Cytoplasm</keyword>
<keyword id="KW-0436">Ligase</keyword>
<keyword id="KW-0547">Nucleotide-binding</keyword>
<keyword id="KW-0648">Protein biosynthesis</keyword>
<name>SYH_BACFR</name>